<protein>
    <recommendedName>
        <fullName>Tryptophan RNA-binding attenuator protein inhibitory protein</fullName>
    </recommendedName>
    <alternativeName>
        <fullName>Anti-TRAP protein</fullName>
        <shortName>AT</shortName>
    </alternativeName>
</protein>
<comment type="function">
    <text>By forming a complex with tryptophan-activated TRAP, and masking its RNA binding site, it inhibits TRAP's RNA binding ability, thereby abolishing TRAP regulation of gene expression, leading to antitermination and increased trp operon expression. AT acts by competing with messenger RNA for the RNA binding domain of TRAP.</text>
</comment>
<comment type="subunit">
    <text>Homopentamer or homohexamer.</text>
</comment>
<comment type="interaction">
    <interactant intactId="EBI-15753070">
        <id>O31466</id>
    </interactant>
    <interactant intactId="EBI-15753070">
        <id>O31466</id>
        <label>rtpA</label>
    </interactant>
    <organismsDiffer>false</organismsDiffer>
    <experiments>2</experiments>
</comment>
<comment type="interaction">
    <interactant intactId="EBI-15753070">
        <id>O31466</id>
    </interactant>
    <interactant intactId="EBI-15582912">
        <id>Q9X6J6</id>
        <label>mtrB</label>
    </interactant>
    <organismsDiffer>true</organismsDiffer>
    <experiments>3</experiments>
</comment>
<comment type="subcellular location">
    <subcellularLocation>
        <location evidence="2">Cytoplasm</location>
    </subcellularLocation>
</comment>
<comment type="induction">
    <text>By uncharged Trp tRNA, via the T-box transcription antitermination mechanism.</text>
</comment>
<comment type="mass spectrometry"/>
<feature type="chain" id="PRO_0000097522" description="Tryptophan RNA-binding attenuator protein inhibitory protein">
    <location>
        <begin position="1"/>
        <end position="53"/>
    </location>
</feature>
<feature type="repeat" description="CXXCXGXG motif">
    <location>
        <begin position="12"/>
        <end position="19"/>
    </location>
</feature>
<feature type="repeat" description="CXXCXGXG motif">
    <location>
        <begin position="26"/>
        <end position="33"/>
    </location>
</feature>
<feature type="helix" evidence="3">
    <location>
        <begin position="5"/>
        <end position="8"/>
    </location>
</feature>
<feature type="strand" evidence="3">
    <location>
        <begin position="9"/>
        <end position="11"/>
    </location>
</feature>
<feature type="turn" evidence="3">
    <location>
        <begin position="13"/>
        <end position="17"/>
    </location>
</feature>
<feature type="strand" evidence="3">
    <location>
        <begin position="18"/>
        <end position="21"/>
    </location>
</feature>
<feature type="turn" evidence="3">
    <location>
        <begin position="27"/>
        <end position="31"/>
    </location>
</feature>
<feature type="strand" evidence="3">
    <location>
        <begin position="32"/>
        <end position="36"/>
    </location>
</feature>
<feature type="helix" evidence="3">
    <location>
        <begin position="38"/>
        <end position="50"/>
    </location>
</feature>
<sequence>MVIATDDLEVACPKCERAGEIEGTPCPACSGKGVILTAQGYTLLDFIQKHLNK</sequence>
<name>RTPA_BACSU</name>
<proteinExistence type="evidence at protein level"/>
<reference key="1">
    <citation type="journal article" date="1997" name="Nature">
        <title>The complete genome sequence of the Gram-positive bacterium Bacillus subtilis.</title>
        <authorList>
            <person name="Kunst F."/>
            <person name="Ogasawara N."/>
            <person name="Moszer I."/>
            <person name="Albertini A.M."/>
            <person name="Alloni G."/>
            <person name="Azevedo V."/>
            <person name="Bertero M.G."/>
            <person name="Bessieres P."/>
            <person name="Bolotin A."/>
            <person name="Borchert S."/>
            <person name="Borriss R."/>
            <person name="Boursier L."/>
            <person name="Brans A."/>
            <person name="Braun M."/>
            <person name="Brignell S.C."/>
            <person name="Bron S."/>
            <person name="Brouillet S."/>
            <person name="Bruschi C.V."/>
            <person name="Caldwell B."/>
            <person name="Capuano V."/>
            <person name="Carter N.M."/>
            <person name="Choi S.-K."/>
            <person name="Codani J.-J."/>
            <person name="Connerton I.F."/>
            <person name="Cummings N.J."/>
            <person name="Daniel R.A."/>
            <person name="Denizot F."/>
            <person name="Devine K.M."/>
            <person name="Duesterhoeft A."/>
            <person name="Ehrlich S.D."/>
            <person name="Emmerson P.T."/>
            <person name="Entian K.-D."/>
            <person name="Errington J."/>
            <person name="Fabret C."/>
            <person name="Ferrari E."/>
            <person name="Foulger D."/>
            <person name="Fritz C."/>
            <person name="Fujita M."/>
            <person name="Fujita Y."/>
            <person name="Fuma S."/>
            <person name="Galizzi A."/>
            <person name="Galleron N."/>
            <person name="Ghim S.-Y."/>
            <person name="Glaser P."/>
            <person name="Goffeau A."/>
            <person name="Golightly E.J."/>
            <person name="Grandi G."/>
            <person name="Guiseppi G."/>
            <person name="Guy B.J."/>
            <person name="Haga K."/>
            <person name="Haiech J."/>
            <person name="Harwood C.R."/>
            <person name="Henaut A."/>
            <person name="Hilbert H."/>
            <person name="Holsappel S."/>
            <person name="Hosono S."/>
            <person name="Hullo M.-F."/>
            <person name="Itaya M."/>
            <person name="Jones L.-M."/>
            <person name="Joris B."/>
            <person name="Karamata D."/>
            <person name="Kasahara Y."/>
            <person name="Klaerr-Blanchard M."/>
            <person name="Klein C."/>
            <person name="Kobayashi Y."/>
            <person name="Koetter P."/>
            <person name="Koningstein G."/>
            <person name="Krogh S."/>
            <person name="Kumano M."/>
            <person name="Kurita K."/>
            <person name="Lapidus A."/>
            <person name="Lardinois S."/>
            <person name="Lauber J."/>
            <person name="Lazarevic V."/>
            <person name="Lee S.-M."/>
            <person name="Levine A."/>
            <person name="Liu H."/>
            <person name="Masuda S."/>
            <person name="Mauel C."/>
            <person name="Medigue C."/>
            <person name="Medina N."/>
            <person name="Mellado R.P."/>
            <person name="Mizuno M."/>
            <person name="Moestl D."/>
            <person name="Nakai S."/>
            <person name="Noback M."/>
            <person name="Noone D."/>
            <person name="O'Reilly M."/>
            <person name="Ogawa K."/>
            <person name="Ogiwara A."/>
            <person name="Oudega B."/>
            <person name="Park S.-H."/>
            <person name="Parro V."/>
            <person name="Pohl T.M."/>
            <person name="Portetelle D."/>
            <person name="Porwollik S."/>
            <person name="Prescott A.M."/>
            <person name="Presecan E."/>
            <person name="Pujic P."/>
            <person name="Purnelle B."/>
            <person name="Rapoport G."/>
            <person name="Rey M."/>
            <person name="Reynolds S."/>
            <person name="Rieger M."/>
            <person name="Rivolta C."/>
            <person name="Rocha E."/>
            <person name="Roche B."/>
            <person name="Rose M."/>
            <person name="Sadaie Y."/>
            <person name="Sato T."/>
            <person name="Scanlan E."/>
            <person name="Schleich S."/>
            <person name="Schroeter R."/>
            <person name="Scoffone F."/>
            <person name="Sekiguchi J."/>
            <person name="Sekowska A."/>
            <person name="Seror S.J."/>
            <person name="Serror P."/>
            <person name="Shin B.-S."/>
            <person name="Soldo B."/>
            <person name="Sorokin A."/>
            <person name="Tacconi E."/>
            <person name="Takagi T."/>
            <person name="Takahashi H."/>
            <person name="Takemaru K."/>
            <person name="Takeuchi M."/>
            <person name="Tamakoshi A."/>
            <person name="Tanaka T."/>
            <person name="Terpstra P."/>
            <person name="Tognoni A."/>
            <person name="Tosato V."/>
            <person name="Uchiyama S."/>
            <person name="Vandenbol M."/>
            <person name="Vannier F."/>
            <person name="Vassarotti A."/>
            <person name="Viari A."/>
            <person name="Wambutt R."/>
            <person name="Wedler E."/>
            <person name="Wedler H."/>
            <person name="Weitzenegger T."/>
            <person name="Winters P."/>
            <person name="Wipat A."/>
            <person name="Yamamoto H."/>
            <person name="Yamane K."/>
            <person name="Yasumoto K."/>
            <person name="Yata K."/>
            <person name="Yoshida K."/>
            <person name="Yoshikawa H.-F."/>
            <person name="Zumstein E."/>
            <person name="Yoshikawa H."/>
            <person name="Danchin A."/>
        </authorList>
    </citation>
    <scope>NUCLEOTIDE SEQUENCE [LARGE SCALE GENOMIC DNA]</scope>
    <source>
        <strain>168</strain>
    </source>
</reference>
<reference key="2">
    <citation type="journal article" date="2001" name="Science">
        <title>Inhibition of the B. subtilis regulatory protein TRAP by the TRAP-inhibitory protein, AT.</title>
        <authorList>
            <person name="Valbuzzi A."/>
            <person name="Yanofsky C."/>
        </authorList>
    </citation>
    <scope>CHARACTERIZATION</scope>
    <scope>MASS SPECTROMETRY</scope>
</reference>
<reference key="3">
    <citation type="journal article" date="2002" name="J. Biol. Chem.">
        <title>The anti-trp RNA-binding attenuation protein (Anti-TRAP), AT, recognizes the tryptophan-activated RNA binding domain of the TRAP regulatory protein.</title>
        <authorList>
            <person name="Valbuzzi A."/>
            <person name="Gollnick P."/>
            <person name="Babitzke P."/>
            <person name="Yanofsky C."/>
        </authorList>
    </citation>
    <scope>CHARACTERIZATION</scope>
</reference>
<evidence type="ECO:0000269" key="1">
    <source>
    </source>
</evidence>
<evidence type="ECO:0000305" key="2"/>
<evidence type="ECO:0007829" key="3">
    <source>
        <dbReference type="PDB" id="2BX9"/>
    </source>
</evidence>
<dbReference type="EMBL" id="AL009126">
    <property type="protein sequence ID" value="CAB12047.1"/>
    <property type="molecule type" value="Genomic_DNA"/>
</dbReference>
<dbReference type="PIR" id="H69766">
    <property type="entry name" value="H69766"/>
</dbReference>
<dbReference type="RefSeq" id="NP_388135.1">
    <property type="nucleotide sequence ID" value="NC_000964.3"/>
</dbReference>
<dbReference type="RefSeq" id="WP_003234807.1">
    <property type="nucleotide sequence ID" value="NZ_OZ025638.1"/>
</dbReference>
<dbReference type="PDB" id="2BX9">
    <property type="method" value="X-ray"/>
    <property type="resolution" value="2.80 A"/>
    <property type="chains" value="A/B/C/D/E/F/G/H/I/J/K/L=1-53"/>
</dbReference>
<dbReference type="PDB" id="2KO8">
    <property type="method" value="NMR"/>
    <property type="chains" value="A/B/C=1-53"/>
</dbReference>
<dbReference type="PDB" id="2ZP8">
    <property type="method" value="X-ray"/>
    <property type="resolution" value="3.20 A"/>
    <property type="chains" value="E/F/G/H/I/J=1-53"/>
</dbReference>
<dbReference type="PDB" id="2ZP9">
    <property type="method" value="X-ray"/>
    <property type="resolution" value="3.20 A"/>
    <property type="chains" value="C/D/E/H/I/J/M/N/O=1-53"/>
</dbReference>
<dbReference type="PDBsum" id="2BX9"/>
<dbReference type="PDBsum" id="2KO8"/>
<dbReference type="PDBsum" id="2ZP8"/>
<dbReference type="PDBsum" id="2ZP9"/>
<dbReference type="BMRB" id="O31466"/>
<dbReference type="SMR" id="O31466"/>
<dbReference type="DIP" id="DIP-48707N"/>
<dbReference type="FunCoup" id="O31466">
    <property type="interactions" value="57"/>
</dbReference>
<dbReference type="IntAct" id="O31466">
    <property type="interactions" value="1"/>
</dbReference>
<dbReference type="STRING" id="224308.BSU02530"/>
<dbReference type="PaxDb" id="224308-BSU02530"/>
<dbReference type="EnsemblBacteria" id="CAB12047">
    <property type="protein sequence ID" value="CAB12047"/>
    <property type="gene ID" value="BSU_02530"/>
</dbReference>
<dbReference type="GeneID" id="86875334"/>
<dbReference type="GeneID" id="938403"/>
<dbReference type="KEGG" id="bsu:BSU02530"/>
<dbReference type="PATRIC" id="fig|224308.179.peg.261"/>
<dbReference type="eggNOG" id="ENOG502ZS83">
    <property type="taxonomic scope" value="Bacteria"/>
</dbReference>
<dbReference type="InParanoid" id="O31466"/>
<dbReference type="OrthoDB" id="2376777at2"/>
<dbReference type="BioCyc" id="BSUB:BSU02530-MONOMER"/>
<dbReference type="EvolutionaryTrace" id="O31466"/>
<dbReference type="Proteomes" id="UP000001570">
    <property type="component" value="Chromosome"/>
</dbReference>
<dbReference type="GO" id="GO:0005737">
    <property type="term" value="C:cytoplasm"/>
    <property type="evidence" value="ECO:0007669"/>
    <property type="project" value="UniProtKB-SubCell"/>
</dbReference>
<dbReference type="GO" id="GO:0042802">
    <property type="term" value="F:identical protein binding"/>
    <property type="evidence" value="ECO:0000353"/>
    <property type="project" value="IntAct"/>
</dbReference>
<dbReference type="CDD" id="cd10748">
    <property type="entry name" value="anti-TRAP"/>
    <property type="match status" value="1"/>
</dbReference>
<dbReference type="Gene3D" id="6.20.20.10">
    <property type="match status" value="1"/>
</dbReference>
<dbReference type="InterPro" id="IPR031538">
    <property type="entry name" value="Anti-TRAP"/>
</dbReference>
<dbReference type="InterPro" id="IPR036410">
    <property type="entry name" value="HSP_DnaJ_Cys-rich_dom_sf"/>
</dbReference>
<dbReference type="Pfam" id="PF15777">
    <property type="entry name" value="Anti-TRAP"/>
    <property type="match status" value="1"/>
</dbReference>
<dbReference type="SUPFAM" id="SSF57938">
    <property type="entry name" value="DnaJ/Hsp40 cysteine-rich domain"/>
    <property type="match status" value="1"/>
</dbReference>
<organism>
    <name type="scientific">Bacillus subtilis (strain 168)</name>
    <dbReference type="NCBI Taxonomy" id="224308"/>
    <lineage>
        <taxon>Bacteria</taxon>
        <taxon>Bacillati</taxon>
        <taxon>Bacillota</taxon>
        <taxon>Bacilli</taxon>
        <taxon>Bacillales</taxon>
        <taxon>Bacillaceae</taxon>
        <taxon>Bacillus</taxon>
    </lineage>
</organism>
<gene>
    <name type="primary">rtpA</name>
    <name type="synonym">yczA</name>
    <name type="ordered locus">BSU02530</name>
</gene>
<accession>O31466</accession>
<keyword id="KW-0002">3D-structure</keyword>
<keyword id="KW-0963">Cytoplasm</keyword>
<keyword id="KW-1185">Reference proteome</keyword>
<keyword id="KW-0677">Repeat</keyword>
<keyword id="KW-0804">Transcription</keyword>
<keyword id="KW-0805">Transcription regulation</keyword>